<accession>B6IRQ7</accession>
<dbReference type="EMBL" id="CP000613">
    <property type="protein sequence ID" value="ACI98143.1"/>
    <property type="molecule type" value="Genomic_DNA"/>
</dbReference>
<dbReference type="RefSeq" id="WP_012565934.1">
    <property type="nucleotide sequence ID" value="NC_011420.2"/>
</dbReference>
<dbReference type="SMR" id="B6IRQ7"/>
<dbReference type="STRING" id="414684.RC1_0712"/>
<dbReference type="KEGG" id="rce:RC1_0712"/>
<dbReference type="eggNOG" id="COG0088">
    <property type="taxonomic scope" value="Bacteria"/>
</dbReference>
<dbReference type="HOGENOM" id="CLU_041575_5_1_5"/>
<dbReference type="OrthoDB" id="9803201at2"/>
<dbReference type="Proteomes" id="UP000001591">
    <property type="component" value="Chromosome"/>
</dbReference>
<dbReference type="GO" id="GO:1990904">
    <property type="term" value="C:ribonucleoprotein complex"/>
    <property type="evidence" value="ECO:0007669"/>
    <property type="project" value="UniProtKB-KW"/>
</dbReference>
<dbReference type="GO" id="GO:0005840">
    <property type="term" value="C:ribosome"/>
    <property type="evidence" value="ECO:0007669"/>
    <property type="project" value="UniProtKB-KW"/>
</dbReference>
<dbReference type="GO" id="GO:0019843">
    <property type="term" value="F:rRNA binding"/>
    <property type="evidence" value="ECO:0007669"/>
    <property type="project" value="UniProtKB-UniRule"/>
</dbReference>
<dbReference type="GO" id="GO:0003735">
    <property type="term" value="F:structural constituent of ribosome"/>
    <property type="evidence" value="ECO:0007669"/>
    <property type="project" value="InterPro"/>
</dbReference>
<dbReference type="GO" id="GO:0006412">
    <property type="term" value="P:translation"/>
    <property type="evidence" value="ECO:0007669"/>
    <property type="project" value="UniProtKB-UniRule"/>
</dbReference>
<dbReference type="Gene3D" id="3.40.1370.10">
    <property type="match status" value="1"/>
</dbReference>
<dbReference type="HAMAP" id="MF_01328_B">
    <property type="entry name" value="Ribosomal_uL4_B"/>
    <property type="match status" value="1"/>
</dbReference>
<dbReference type="InterPro" id="IPR002136">
    <property type="entry name" value="Ribosomal_uL4"/>
</dbReference>
<dbReference type="InterPro" id="IPR013005">
    <property type="entry name" value="Ribosomal_uL4-like"/>
</dbReference>
<dbReference type="InterPro" id="IPR023574">
    <property type="entry name" value="Ribosomal_uL4_dom_sf"/>
</dbReference>
<dbReference type="NCBIfam" id="TIGR03953">
    <property type="entry name" value="rplD_bact"/>
    <property type="match status" value="1"/>
</dbReference>
<dbReference type="PANTHER" id="PTHR10746">
    <property type="entry name" value="50S RIBOSOMAL PROTEIN L4"/>
    <property type="match status" value="1"/>
</dbReference>
<dbReference type="PANTHER" id="PTHR10746:SF6">
    <property type="entry name" value="LARGE RIBOSOMAL SUBUNIT PROTEIN UL4M"/>
    <property type="match status" value="1"/>
</dbReference>
<dbReference type="Pfam" id="PF00573">
    <property type="entry name" value="Ribosomal_L4"/>
    <property type="match status" value="1"/>
</dbReference>
<dbReference type="SUPFAM" id="SSF52166">
    <property type="entry name" value="Ribosomal protein L4"/>
    <property type="match status" value="1"/>
</dbReference>
<proteinExistence type="inferred from homology"/>
<comment type="function">
    <text evidence="1">One of the primary rRNA binding proteins, this protein initially binds near the 5'-end of the 23S rRNA. It is important during the early stages of 50S assembly. It makes multiple contacts with different domains of the 23S rRNA in the assembled 50S subunit and ribosome.</text>
</comment>
<comment type="function">
    <text evidence="1">Forms part of the polypeptide exit tunnel.</text>
</comment>
<comment type="subunit">
    <text evidence="1">Part of the 50S ribosomal subunit.</text>
</comment>
<comment type="similarity">
    <text evidence="1">Belongs to the universal ribosomal protein uL4 family.</text>
</comment>
<reference key="1">
    <citation type="submission" date="2007-03" db="EMBL/GenBank/DDBJ databases">
        <title>Genome sequence of Rhodospirillum centenum.</title>
        <authorList>
            <person name="Touchman J.W."/>
            <person name="Bauer C."/>
            <person name="Blankenship R.E."/>
        </authorList>
    </citation>
    <scope>NUCLEOTIDE SEQUENCE [LARGE SCALE GENOMIC DNA]</scope>
    <source>
        <strain>ATCC 51521 / SW</strain>
    </source>
</reference>
<protein>
    <recommendedName>
        <fullName evidence="1">Large ribosomal subunit protein uL4</fullName>
    </recommendedName>
    <alternativeName>
        <fullName evidence="3">50S ribosomal protein L4</fullName>
    </alternativeName>
</protein>
<gene>
    <name evidence="1" type="primary">rplD</name>
    <name type="ordered locus">RC1_0712</name>
</gene>
<feature type="chain" id="PRO_1000142176" description="Large ribosomal subunit protein uL4">
    <location>
        <begin position="1"/>
        <end position="206"/>
    </location>
</feature>
<feature type="region of interest" description="Disordered" evidence="2">
    <location>
        <begin position="62"/>
        <end position="85"/>
    </location>
</feature>
<organism>
    <name type="scientific">Rhodospirillum centenum (strain ATCC 51521 / SW)</name>
    <dbReference type="NCBI Taxonomy" id="414684"/>
    <lineage>
        <taxon>Bacteria</taxon>
        <taxon>Pseudomonadati</taxon>
        <taxon>Pseudomonadota</taxon>
        <taxon>Alphaproteobacteria</taxon>
        <taxon>Rhodospirillales</taxon>
        <taxon>Rhodospirillaceae</taxon>
        <taxon>Rhodospirillum</taxon>
    </lineage>
</organism>
<name>RL4_RHOCS</name>
<sequence>MKTTVKNLNNETVGEIELADEVFGLPTRQDILTRMVLWQLAKRRQGTHKTKGISEIAGTTKKPWRQKGTGRARQGSTRSPQFRGGARIFGPVVRSHEHDLTKKVRKLALKTALSTKAAEGKLFVLEAAKADTHKTKALAAQLKTLGLTSALIIDGANLDETFVRAARNIPHLDVLPEQGANVYDILRRDVLVLTRNAVEQLEARLK</sequence>
<keyword id="KW-1185">Reference proteome</keyword>
<keyword id="KW-0687">Ribonucleoprotein</keyword>
<keyword id="KW-0689">Ribosomal protein</keyword>
<keyword id="KW-0694">RNA-binding</keyword>
<keyword id="KW-0699">rRNA-binding</keyword>
<evidence type="ECO:0000255" key="1">
    <source>
        <dbReference type="HAMAP-Rule" id="MF_01328"/>
    </source>
</evidence>
<evidence type="ECO:0000256" key="2">
    <source>
        <dbReference type="SAM" id="MobiDB-lite"/>
    </source>
</evidence>
<evidence type="ECO:0000305" key="3"/>